<comment type="function">
    <text evidence="2">Receptor for interleukin-2. This beta subunit is involved in receptor mediated endocytosis and transduces the mitogenic signals of IL2. Probably in association with IL15RA, involved in the stimulation of neutrophil phagocytosis by IL15 (By similarity).</text>
</comment>
<comment type="subunit">
    <text evidence="2">Non-covalent dimer of an alpha and a beta subunit. IL2R exists in 3 different forms: a high affinity dimer, an intermediate affinity monomer (beta subunit), and a low affinity monomer (alpha subunit). The high and intermediate affinity forms also associate with a gamma subunit. Interacts with SHB upon interleukin stimulation (By similarity).</text>
</comment>
<comment type="subcellular location">
    <subcellularLocation>
        <location evidence="2">Cell membrane</location>
        <topology evidence="3">Single-pass type I membrane protein</topology>
    </subcellularLocation>
    <subcellularLocation>
        <location evidence="2">Cell surface</location>
    </subcellularLocation>
</comment>
<comment type="domain">
    <text>The WSXWS motif appears to be necessary for proper protein folding and thereby efficient intracellular transport and cell-surface receptor binding.</text>
</comment>
<comment type="domain">
    <text>The box 1 motif is required for JAK interaction and/or activation.</text>
</comment>
<comment type="similarity">
    <text evidence="6">Belongs to the type I cytokine receptor family. Type 4 subfamily.</text>
</comment>
<feature type="signal peptide" evidence="3">
    <location>
        <begin position="1"/>
        <end position="26"/>
    </location>
</feature>
<feature type="chain" id="PRO_0000010880" description="Interleukin-2 receptor subunit beta">
    <location>
        <begin position="27"/>
        <end position="537"/>
    </location>
</feature>
<feature type="topological domain" description="Extracellular" evidence="3">
    <location>
        <begin position="27"/>
        <end position="239"/>
    </location>
</feature>
<feature type="transmembrane region" description="Helical" evidence="3">
    <location>
        <begin position="240"/>
        <end position="267"/>
    </location>
</feature>
<feature type="topological domain" description="Cytoplasmic" evidence="3">
    <location>
        <begin position="268"/>
        <end position="537"/>
    </location>
</feature>
<feature type="domain" description="Fibronectin type-III" evidence="4">
    <location>
        <begin position="135"/>
        <end position="235"/>
    </location>
</feature>
<feature type="region of interest" description="Disordered" evidence="5">
    <location>
        <begin position="442"/>
        <end position="466"/>
    </location>
</feature>
<feature type="region of interest" description="Disordered" evidence="5">
    <location>
        <begin position="479"/>
        <end position="498"/>
    </location>
</feature>
<feature type="short sequence motif" description="WSXWS motif">
    <location>
        <begin position="221"/>
        <end position="225"/>
    </location>
</feature>
<feature type="short sequence motif" description="Box 1 motif">
    <location>
        <begin position="280"/>
        <end position="288"/>
    </location>
</feature>
<feature type="compositionally biased region" description="Polar residues" evidence="5">
    <location>
        <begin position="487"/>
        <end position="497"/>
    </location>
</feature>
<feature type="glycosylation site" description="N-linked (GlcNAc...) asparagine" evidence="3">
    <location>
        <position position="43"/>
    </location>
</feature>
<feature type="glycosylation site" description="N-linked (GlcNAc...) asparagine" evidence="3">
    <location>
        <position position="55"/>
    </location>
</feature>
<feature type="glycosylation site" description="N-linked (GlcNAc...) asparagine" evidence="3">
    <location>
        <position position="71"/>
    </location>
</feature>
<feature type="glycosylation site" description="N-linked (GlcNAc...) asparagine" evidence="3">
    <location>
        <position position="150"/>
    </location>
</feature>
<feature type="disulfide bond" evidence="1">
    <location>
        <begin position="36"/>
        <end position="46"/>
    </location>
</feature>
<feature type="disulfide bond" evidence="1">
    <location>
        <begin position="74"/>
        <end position="86"/>
    </location>
</feature>
<protein>
    <recommendedName>
        <fullName>Interleukin-2 receptor subunit beta</fullName>
        <shortName>IL-2 receptor subunit beta</shortName>
        <shortName>IL-2R subunit beta</shortName>
        <shortName>IL-2RB</shortName>
    </recommendedName>
    <alternativeName>
        <fullName>High affinity IL-2 receptor subunit beta</fullName>
    </alternativeName>
    <alternativeName>
        <fullName>p70-75</fullName>
    </alternativeName>
    <cdAntigenName>CD122</cdAntigenName>
</protein>
<dbReference type="EMBL" id="M55050">
    <property type="protein sequence ID" value="AAA41429.1"/>
    <property type="molecule type" value="mRNA"/>
</dbReference>
<dbReference type="PIR" id="B46535">
    <property type="entry name" value="B46535"/>
</dbReference>
<dbReference type="RefSeq" id="NP_037327.1">
    <property type="nucleotide sequence ID" value="NM_013195.1"/>
</dbReference>
<dbReference type="SMR" id="P26896"/>
<dbReference type="FunCoup" id="P26896">
    <property type="interactions" value="413"/>
</dbReference>
<dbReference type="STRING" id="10116.ENSRNOP00000075262"/>
<dbReference type="GlyCosmos" id="P26896">
    <property type="glycosylation" value="4 sites, No reported glycans"/>
</dbReference>
<dbReference type="GlyGen" id="P26896">
    <property type="glycosylation" value="4 sites"/>
</dbReference>
<dbReference type="PhosphoSitePlus" id="P26896"/>
<dbReference type="PaxDb" id="10116-ENSRNOP00000064699"/>
<dbReference type="GeneID" id="25746"/>
<dbReference type="KEGG" id="rno:25746"/>
<dbReference type="AGR" id="RGD:2896"/>
<dbReference type="CTD" id="3560"/>
<dbReference type="RGD" id="2896">
    <property type="gene designation" value="Il2rb"/>
</dbReference>
<dbReference type="eggNOG" id="ENOG502S0MR">
    <property type="taxonomic scope" value="Eukaryota"/>
</dbReference>
<dbReference type="InParanoid" id="P26896"/>
<dbReference type="PhylomeDB" id="P26896"/>
<dbReference type="Reactome" id="R-RNO-5673001">
    <property type="pathway name" value="RAF/MAP kinase cascade"/>
</dbReference>
<dbReference type="Reactome" id="R-RNO-8983432">
    <property type="pathway name" value="Interleukin-15 signaling"/>
</dbReference>
<dbReference type="Reactome" id="R-RNO-9020558">
    <property type="pathway name" value="Interleukin-2 signaling"/>
</dbReference>
<dbReference type="Reactome" id="R-RNO-912526">
    <property type="pathway name" value="Interleukin receptor SHC signaling"/>
</dbReference>
<dbReference type="PRO" id="PR:P26896"/>
<dbReference type="Proteomes" id="UP000002494">
    <property type="component" value="Unplaced"/>
</dbReference>
<dbReference type="GO" id="GO:0009986">
    <property type="term" value="C:cell surface"/>
    <property type="evidence" value="ECO:0000314"/>
    <property type="project" value="RGD"/>
</dbReference>
<dbReference type="GO" id="GO:0009897">
    <property type="term" value="C:external side of plasma membrane"/>
    <property type="evidence" value="ECO:0000266"/>
    <property type="project" value="RGD"/>
</dbReference>
<dbReference type="GO" id="GO:0005886">
    <property type="term" value="C:plasma membrane"/>
    <property type="evidence" value="ECO:0000250"/>
    <property type="project" value="UniProtKB"/>
</dbReference>
<dbReference type="GO" id="GO:0015026">
    <property type="term" value="F:coreceptor activity"/>
    <property type="evidence" value="ECO:0000266"/>
    <property type="project" value="RGD"/>
</dbReference>
<dbReference type="GO" id="GO:0004896">
    <property type="term" value="F:cytokine receptor activity"/>
    <property type="evidence" value="ECO:0000318"/>
    <property type="project" value="GO_Central"/>
</dbReference>
<dbReference type="GO" id="GO:0042010">
    <property type="term" value="F:interleukin-15 receptor activity"/>
    <property type="evidence" value="ECO:0000250"/>
    <property type="project" value="UniProtKB"/>
</dbReference>
<dbReference type="GO" id="GO:0019976">
    <property type="term" value="F:interleukin-2 binding"/>
    <property type="evidence" value="ECO:0000315"/>
    <property type="project" value="RGD"/>
</dbReference>
<dbReference type="GO" id="GO:0004911">
    <property type="term" value="F:interleukin-2 receptor activity"/>
    <property type="evidence" value="ECO:0000315"/>
    <property type="project" value="RGD"/>
</dbReference>
<dbReference type="GO" id="GO:0019221">
    <property type="term" value="P:cytokine-mediated signaling pathway"/>
    <property type="evidence" value="ECO:0000270"/>
    <property type="project" value="RGD"/>
</dbReference>
<dbReference type="GO" id="GO:0016064">
    <property type="term" value="P:immunoglobulin mediated immune response"/>
    <property type="evidence" value="ECO:0000318"/>
    <property type="project" value="GO_Central"/>
</dbReference>
<dbReference type="GO" id="GO:0035723">
    <property type="term" value="P:interleukin-15-mediated signaling pathway"/>
    <property type="evidence" value="ECO:0000250"/>
    <property type="project" value="UniProtKB"/>
</dbReference>
<dbReference type="GO" id="GO:0038110">
    <property type="term" value="P:interleukin-2-mediated signaling pathway"/>
    <property type="evidence" value="ECO:0000250"/>
    <property type="project" value="UniProtKB"/>
</dbReference>
<dbReference type="GO" id="GO:0043066">
    <property type="term" value="P:negative regulation of apoptotic process"/>
    <property type="evidence" value="ECO:0000266"/>
    <property type="project" value="RGD"/>
</dbReference>
<dbReference type="GO" id="GO:0050766">
    <property type="term" value="P:positive regulation of phagocytosis"/>
    <property type="evidence" value="ECO:0000250"/>
    <property type="project" value="UniProtKB"/>
</dbReference>
<dbReference type="CDD" id="cd00063">
    <property type="entry name" value="FN3"/>
    <property type="match status" value="1"/>
</dbReference>
<dbReference type="Gene3D" id="2.60.40.10">
    <property type="entry name" value="Immunoglobulins"/>
    <property type="match status" value="2"/>
</dbReference>
<dbReference type="InterPro" id="IPR003961">
    <property type="entry name" value="FN3_dom"/>
</dbReference>
<dbReference type="InterPro" id="IPR036116">
    <property type="entry name" value="FN3_sf"/>
</dbReference>
<dbReference type="InterPro" id="IPR003531">
    <property type="entry name" value="Hempt_rcpt_S_F1_CS"/>
</dbReference>
<dbReference type="InterPro" id="IPR013783">
    <property type="entry name" value="Ig-like_fold"/>
</dbReference>
<dbReference type="InterPro" id="IPR040951">
    <property type="entry name" value="IL2RB_N1"/>
</dbReference>
<dbReference type="PANTHER" id="PTHR23037">
    <property type="entry name" value="CYTOKINE RECEPTOR"/>
    <property type="match status" value="1"/>
</dbReference>
<dbReference type="PANTHER" id="PTHR23037:SF30">
    <property type="entry name" value="INTERLEUKIN-2 RECEPTOR SUBUNIT BETA"/>
    <property type="match status" value="1"/>
</dbReference>
<dbReference type="Pfam" id="PF18707">
    <property type="entry name" value="IL2RB_N1"/>
    <property type="match status" value="1"/>
</dbReference>
<dbReference type="SUPFAM" id="SSF49265">
    <property type="entry name" value="Fibronectin type III"/>
    <property type="match status" value="2"/>
</dbReference>
<dbReference type="PROSITE" id="PS50853">
    <property type="entry name" value="FN3"/>
    <property type="match status" value="1"/>
</dbReference>
<dbReference type="PROSITE" id="PS01355">
    <property type="entry name" value="HEMATOPO_REC_S_F1"/>
    <property type="match status" value="1"/>
</dbReference>
<name>IL2RB_RAT</name>
<gene>
    <name type="primary">Il2rb</name>
</gene>
<accession>P26896</accession>
<reference key="1">
    <citation type="journal article" date="1991" name="Eur. J. Immunol.">
        <title>Molecular cloning of cDNAs for the rat interleukin 2 receptor alpha and beta chain genes: differentially regulated gene activity in response to mitogenic stimulation.</title>
        <authorList>
            <person name="Page T.H."/>
            <person name="Dallman M.J."/>
        </authorList>
    </citation>
    <scope>NUCLEOTIDE SEQUENCE [MRNA]</scope>
</reference>
<keyword id="KW-1003">Cell membrane</keyword>
<keyword id="KW-1015">Disulfide bond</keyword>
<keyword id="KW-0325">Glycoprotein</keyword>
<keyword id="KW-0472">Membrane</keyword>
<keyword id="KW-0675">Receptor</keyword>
<keyword id="KW-1185">Reference proteome</keyword>
<keyword id="KW-0732">Signal</keyword>
<keyword id="KW-0812">Transmembrane</keyword>
<keyword id="KW-1133">Transmembrane helix</keyword>
<evidence type="ECO:0000250" key="1"/>
<evidence type="ECO:0000250" key="2">
    <source>
        <dbReference type="UniProtKB" id="P14784"/>
    </source>
</evidence>
<evidence type="ECO:0000255" key="3"/>
<evidence type="ECO:0000255" key="4">
    <source>
        <dbReference type="PROSITE-ProRule" id="PRU00316"/>
    </source>
</evidence>
<evidence type="ECO:0000256" key="5">
    <source>
        <dbReference type="SAM" id="MobiDB-lite"/>
    </source>
</evidence>
<evidence type="ECO:0000305" key="6"/>
<proteinExistence type="evidence at transcript level"/>
<sequence length="537" mass="60657">MATVDLSWRLPLYILLLLLATTWVSAAVNDCSHLKCFYNSRANVSCMWSPEEALNVTSCHIHAKSDMRHWNKTCELTPVRQASWACNLILGPLPDSQSLTSVDLLSLSVVCWEEKGWRRVKTCTFHPFDNLRLIAPHSLQVLHIETRRCNISWEVSQVSHYVNPYLEFEARRRLLDRSWEDASVFSLKQRQQWIFLETLTPDTSYELQVRVIAQRGKTRTWSPWSQPMAFRTRPADPKEIFPLPWLRCLLLVLGCFFGFLSCVCVLVKCRYLGPWLKTLLKCHIPDPSEFFSQLSSQHGGDLQKWLSSPVPQSFFSPTGSAPEISPLEVLDRDSKTMQMLLFQKEKASSPSPSGHSQASCFTNQGYFFFHLSNALEIESCQVYFTYDPCMEEDVEEDGPRLPEESPLPPLLPFTGEQDDYCAFPPRDDLLLFSPSMSTPNTAYGNSITPEERPPLSLQEGLPSLASPDLMGLQHPLELELGDDGEGMSTNSSGQQASVPEAALMGTTKTEARPVLTLNTDAYLSLQELQAQDSAHLI</sequence>
<organism>
    <name type="scientific">Rattus norvegicus</name>
    <name type="common">Rat</name>
    <dbReference type="NCBI Taxonomy" id="10116"/>
    <lineage>
        <taxon>Eukaryota</taxon>
        <taxon>Metazoa</taxon>
        <taxon>Chordata</taxon>
        <taxon>Craniata</taxon>
        <taxon>Vertebrata</taxon>
        <taxon>Euteleostomi</taxon>
        <taxon>Mammalia</taxon>
        <taxon>Eutheria</taxon>
        <taxon>Euarchontoglires</taxon>
        <taxon>Glires</taxon>
        <taxon>Rodentia</taxon>
        <taxon>Myomorpha</taxon>
        <taxon>Muroidea</taxon>
        <taxon>Muridae</taxon>
        <taxon>Murinae</taxon>
        <taxon>Rattus</taxon>
    </lineage>
</organism>